<gene>
    <name type="primary">C</name>
</gene>
<reference key="1">
    <citation type="journal article" date="1985" name="J. Med. Virol.">
        <title>Comparative sequence analysis of duck and human hepatitis B virus genomes.</title>
        <authorList>
            <person name="Sprengel R."/>
            <person name="Kuhn C."/>
            <person name="Will H."/>
            <person name="Schaller H."/>
        </authorList>
    </citation>
    <scope>NUCLEOTIDE SEQUENCE [GENOMIC DNA]</scope>
</reference>
<feature type="chain" id="PRO_0000324345" description="Capsid protein">
    <location>
        <begin position="1"/>
        <end position="262"/>
    </location>
</feature>
<feature type="region of interest" description="Disordered" evidence="4">
    <location>
        <begin position="183"/>
        <end position="262"/>
    </location>
</feature>
<feature type="region of interest" description="RNA binding" evidence="1">
    <location>
        <begin position="254"/>
        <end position="260"/>
    </location>
</feature>
<feature type="short sequence motif" description="Bipartite nuclear localization signal" evidence="3">
    <location>
        <begin position="215"/>
        <end position="233"/>
    </location>
</feature>
<feature type="compositionally biased region" description="Basic residues" evidence="4">
    <location>
        <begin position="215"/>
        <end position="234"/>
    </location>
</feature>
<feature type="compositionally biased region" description="Basic residues" evidence="4">
    <location>
        <begin position="252"/>
        <end position="262"/>
    </location>
</feature>
<feature type="modified residue" description="Phosphoserine; by host" evidence="1">
    <location>
        <position position="232"/>
    </location>
</feature>
<feature type="modified residue" description="Phosphoserine; by host" evidence="1">
    <location>
        <position position="245"/>
    </location>
</feature>
<protein>
    <recommendedName>
        <fullName>Capsid protein</fullName>
    </recommendedName>
    <alternativeName>
        <fullName>Core antigen</fullName>
    </alternativeName>
    <alternativeName>
        <fullName>Core protein</fullName>
    </alternativeName>
    <alternativeName>
        <fullName>HBcAg</fullName>
    </alternativeName>
</protein>
<keyword id="KW-0024">Alternative initiation</keyword>
<keyword id="KW-0167">Capsid protein</keyword>
<keyword id="KW-1176">Cytoplasmic inwards viral transport</keyword>
<keyword id="KW-0238">DNA-binding</keyword>
<keyword id="KW-1035">Host cytoplasm</keyword>
<keyword id="KW-0945">Host-virus interaction</keyword>
<keyword id="KW-1177">Microtubular inwards viral transport</keyword>
<keyword id="KW-0597">Phosphoprotein</keyword>
<keyword id="KW-0694">RNA-binding</keyword>
<keyword id="KW-1144">T=4 icosahedral capsid protein</keyword>
<keyword id="KW-1163">Viral penetration into host nucleus</keyword>
<keyword id="KW-0946">Virion</keyword>
<keyword id="KW-1160">Virus entry into host cell</keyword>
<accession>P0C6J8</accession>
<name>CAPSD_DHBV3</name>
<sequence length="262" mass="30313">MDINASRALANVYDLPDDFFPKIDDLVRDAKDALEPYWRSDSIKKHVLIATHFVDLIEDFWQTTQGMHEIAEALRAVIPPTTTPVPQGYLIQHDEAEEIPLGDLFKHQEERIVSFQPDYPITARIHAHLKAYAKINEESLDRARRLLWWHYNCLLWGEANVTNYISRLRTWLSTPERYRGRDAPTIEAITRPIQVAQGGRKTTSGTRKPRGLEPRRRKVKTTVVYGRRRSKSRERRAPTPQRAGSPLPRSSSSHHRSPSPRK</sequence>
<organismHost>
    <name type="scientific">Anas</name>
    <name type="common">ducks</name>
    <dbReference type="NCBI Taxonomy" id="8835"/>
</organismHost>
<dbReference type="EMBL" id="DQ195079">
    <property type="status" value="NOT_ANNOTATED_CDS"/>
    <property type="molecule type" value="Genomic_DNA"/>
</dbReference>
<dbReference type="SMR" id="P0C6J8"/>
<dbReference type="Proteomes" id="UP000007204">
    <property type="component" value="Genome"/>
</dbReference>
<dbReference type="GO" id="GO:0043657">
    <property type="term" value="C:host cell"/>
    <property type="evidence" value="ECO:0007669"/>
    <property type="project" value="GOC"/>
</dbReference>
<dbReference type="GO" id="GO:0030430">
    <property type="term" value="C:host cell cytoplasm"/>
    <property type="evidence" value="ECO:0007669"/>
    <property type="project" value="UniProtKB-SubCell"/>
</dbReference>
<dbReference type="GO" id="GO:0039619">
    <property type="term" value="C:T=4 icosahedral viral capsid"/>
    <property type="evidence" value="ECO:0007669"/>
    <property type="project" value="UniProtKB-KW"/>
</dbReference>
<dbReference type="GO" id="GO:0003677">
    <property type="term" value="F:DNA binding"/>
    <property type="evidence" value="ECO:0007669"/>
    <property type="project" value="UniProtKB-KW"/>
</dbReference>
<dbReference type="GO" id="GO:0003723">
    <property type="term" value="F:RNA binding"/>
    <property type="evidence" value="ECO:0007669"/>
    <property type="project" value="UniProtKB-KW"/>
</dbReference>
<dbReference type="GO" id="GO:0005198">
    <property type="term" value="F:structural molecule activity"/>
    <property type="evidence" value="ECO:0007669"/>
    <property type="project" value="InterPro"/>
</dbReference>
<dbReference type="GO" id="GO:0075521">
    <property type="term" value="P:microtubule-dependent intracellular transport of viral material towards nucleus"/>
    <property type="evidence" value="ECO:0007669"/>
    <property type="project" value="UniProtKB-KW"/>
</dbReference>
<dbReference type="GO" id="GO:0046718">
    <property type="term" value="P:symbiont entry into host cell"/>
    <property type="evidence" value="ECO:0007669"/>
    <property type="project" value="UniProtKB-KW"/>
</dbReference>
<dbReference type="GO" id="GO:0075732">
    <property type="term" value="P:viral penetration into host nucleus"/>
    <property type="evidence" value="ECO:0007669"/>
    <property type="project" value="UniProtKB-KW"/>
</dbReference>
<dbReference type="Gene3D" id="1.10.4090.10">
    <property type="entry name" value="Viral capsid, core domain supefamily, Hepatitis B virus"/>
    <property type="match status" value="2"/>
</dbReference>
<dbReference type="InterPro" id="IPR002006">
    <property type="entry name" value="Hepatitis_core"/>
</dbReference>
<dbReference type="InterPro" id="IPR036459">
    <property type="entry name" value="Viral_capsid_core_dom_sf_HBV"/>
</dbReference>
<dbReference type="Pfam" id="PF00906">
    <property type="entry name" value="Hepatitis_core"/>
    <property type="match status" value="1"/>
</dbReference>
<dbReference type="SUPFAM" id="SSF47852">
    <property type="entry name" value="Hepatitis B viral capsid (hbcag)"/>
    <property type="match status" value="1"/>
</dbReference>
<organism>
    <name type="scientific">Duck hepatitis B virus (strain Germany/DHBV-3)</name>
    <name type="common">DHBV</name>
    <dbReference type="NCBI Taxonomy" id="489542"/>
    <lineage>
        <taxon>Viruses</taxon>
        <taxon>Riboviria</taxon>
        <taxon>Pararnavirae</taxon>
        <taxon>Artverviricota</taxon>
        <taxon>Revtraviricetes</taxon>
        <taxon>Blubervirales</taxon>
        <taxon>Hepadnaviridae</taxon>
        <taxon>Avihepadnavirus</taxon>
        <taxon>Duck hepatitis B virus</taxon>
    </lineage>
</organism>
<evidence type="ECO:0000250" key="1"/>
<evidence type="ECO:0000250" key="2">
    <source>
        <dbReference type="UniProtKB" id="P03148"/>
    </source>
</evidence>
<evidence type="ECO:0000255" key="3"/>
<evidence type="ECO:0000256" key="4">
    <source>
        <dbReference type="SAM" id="MobiDB-lite"/>
    </source>
</evidence>
<evidence type="ECO:0000305" key="5"/>
<proteinExistence type="inferred from homology"/>
<comment type="function">
    <text evidence="1">Self assembles to form an icosahedral capsid. Most capsid appear to be large particles with an icosahedral symmetry of T=4 and consist of 240 copies of capsid protein, though a fraction forms smaller T=3 particles consisting of 180 capsid proteins. Entering capsid are transported along microtubules to the nucleus. Phosphorylation of the capsid is thought to induce exposure of nuclear localization signal in the C-terminal portion of the capsid protein that allows binding to the nuclear pore complex via the importin (karyopherin-) alpha and beta. Capsids are imported in intact form through the nuclear pore into the nuclear basket, where it probably binds NUP153. Only capsids that contain the mature viral genome can release the viral DNA and capsid protein into the nucleoplasm. Immature capsids get stucked in the basket. Capsids encapsulate the pre-genomic RNA and the P protein. Pre-genomic RNA is reverse transcribed into DNA while the capsid is still in the cytoplasm. The capsid can then either be directed to the nucleus, providing more genome for transcription, or bud through the endoplasmic reticulum to provide new virions (By similarity).</text>
</comment>
<comment type="subunit">
    <text evidence="1">Homodimerizes, then multimerizes.</text>
</comment>
<comment type="subcellular location">
    <molecule>Capsid protein</molecule>
    <subcellularLocation>
        <location evidence="2">Virion</location>
    </subcellularLocation>
    <subcellularLocation>
        <location evidence="2">Host cytoplasm</location>
    </subcellularLocation>
</comment>
<comment type="alternative products">
    <event type="alternative initiation"/>
    <isoform>
        <id>P0C6J8-1</id>
        <name>Capsid protein</name>
        <sequence type="displayed"/>
    </isoform>
    <isoform>
        <id>P0C6J9-1</id>
        <name>External core antigen</name>
        <sequence type="external"/>
    </isoform>
</comment>
<comment type="similarity">
    <text evidence="5">Belongs to the avihepadnavirus core antigen family.</text>
</comment>